<keyword id="KW-0496">Mitochondrion</keyword>
<keyword id="KW-1185">Reference proteome</keyword>
<keyword id="KW-0687">Ribonucleoprotein</keyword>
<keyword id="KW-0689">Ribosomal protein</keyword>
<keyword id="KW-0691">RNA editing</keyword>
<organism>
    <name type="scientific">Triticum aestivum</name>
    <name type="common">Wheat</name>
    <dbReference type="NCBI Taxonomy" id="4565"/>
    <lineage>
        <taxon>Eukaryota</taxon>
        <taxon>Viridiplantae</taxon>
        <taxon>Streptophyta</taxon>
        <taxon>Embryophyta</taxon>
        <taxon>Tracheophyta</taxon>
        <taxon>Spermatophyta</taxon>
        <taxon>Magnoliopsida</taxon>
        <taxon>Liliopsida</taxon>
        <taxon>Poales</taxon>
        <taxon>Poaceae</taxon>
        <taxon>BOP clade</taxon>
        <taxon>Pooideae</taxon>
        <taxon>Triticodae</taxon>
        <taxon>Triticeae</taxon>
        <taxon>Triticinae</taxon>
        <taxon>Triticum</taxon>
    </lineage>
</organism>
<proteinExistence type="evidence at transcript level"/>
<feature type="chain" id="PRO_0000146449" description="Small ribosomal subunit protein uS12m">
    <location>
        <begin position="1"/>
        <end position="125"/>
    </location>
</feature>
<feature type="region of interest" description="Disordered" evidence="1">
    <location>
        <begin position="1"/>
        <end position="27"/>
    </location>
</feature>
<feature type="compositionally biased region" description="Basic and acidic residues" evidence="1">
    <location>
        <begin position="10"/>
        <end position="23"/>
    </location>
</feature>
<gene>
    <name type="primary">RPS12</name>
</gene>
<protein>
    <recommendedName>
        <fullName evidence="3">Small ribosomal subunit protein uS12m</fullName>
    </recommendedName>
    <alternativeName>
        <fullName>Ribosomal protein S12, mitochondrial</fullName>
    </alternativeName>
</protein>
<name>RT12_WHEAT</name>
<accession>P60098</accession>
<accession>P10851</accession>
<sequence length="125" mass="14309">MPTKNQLIRHGREEKRRTDRTRALDQCPQKQGVCLRVSTRTPKKPNSALRKIAKVRLSNRHDIFAYIPGEGHNLQEHSIVLVRGGRVKDLPGVKFHCIRGVKDLLGIPDRRKGRSKYGAERPKSK</sequence>
<comment type="function">
    <text>Protein S12 is involved in the translation initiation step.</text>
</comment>
<comment type="subcellular location">
    <subcellularLocation>
        <location>Mitochondrion</location>
    </subcellularLocation>
</comment>
<comment type="RNA editing">
    <location>
        <position position="24" evidence="2"/>
    </location>
    <location>
        <position position="66" evidence="2"/>
    </location>
    <location>
        <position position="74" evidence="2"/>
    </location>
    <location>
        <position position="90" evidence="2"/>
    </location>
    <location>
        <position position="95" evidence="2"/>
    </location>
    <location>
        <position position="97" evidence="2"/>
    </location>
</comment>
<comment type="similarity">
    <text evidence="3">Belongs to the universal ribosomal protein uS12 family.</text>
</comment>
<geneLocation type="mitochondrion"/>
<evidence type="ECO:0000256" key="1">
    <source>
        <dbReference type="SAM" id="MobiDB-lite"/>
    </source>
</evidence>
<evidence type="ECO:0000269" key="2">
    <source>
    </source>
</evidence>
<evidence type="ECO:0000305" key="3"/>
<dbReference type="EMBL" id="X14262">
    <property type="protein sequence ID" value="CAA32476.1"/>
    <property type="status" value="ALT_SEQ"/>
    <property type="molecule type" value="Genomic_DNA"/>
</dbReference>
<dbReference type="EMBL" id="X59153">
    <property type="protein sequence ID" value="CAA41865.1"/>
    <property type="status" value="ALT_SEQ"/>
    <property type="molecule type" value="Genomic_DNA"/>
</dbReference>
<dbReference type="PIR" id="JQ1375">
    <property type="entry name" value="R3WT12"/>
</dbReference>
<dbReference type="RefSeq" id="YP_398424.1">
    <property type="nucleotide sequence ID" value="NC_007579.1"/>
</dbReference>
<dbReference type="SMR" id="P60098"/>
<dbReference type="PaxDb" id="4565-Traes_1DL_8E8EBCB2F.1"/>
<dbReference type="eggNOG" id="KOG1750">
    <property type="taxonomic scope" value="Eukaryota"/>
</dbReference>
<dbReference type="Proteomes" id="UP000019116">
    <property type="component" value="Unplaced"/>
</dbReference>
<dbReference type="GO" id="GO:0005739">
    <property type="term" value="C:mitochondrion"/>
    <property type="evidence" value="ECO:0007669"/>
    <property type="project" value="UniProtKB-SubCell"/>
</dbReference>
<dbReference type="GO" id="GO:0015935">
    <property type="term" value="C:small ribosomal subunit"/>
    <property type="evidence" value="ECO:0007669"/>
    <property type="project" value="InterPro"/>
</dbReference>
<dbReference type="GO" id="GO:0003735">
    <property type="term" value="F:structural constituent of ribosome"/>
    <property type="evidence" value="ECO:0007669"/>
    <property type="project" value="InterPro"/>
</dbReference>
<dbReference type="GO" id="GO:0006412">
    <property type="term" value="P:translation"/>
    <property type="evidence" value="ECO:0007669"/>
    <property type="project" value="InterPro"/>
</dbReference>
<dbReference type="CDD" id="cd03368">
    <property type="entry name" value="Ribosomal_S12"/>
    <property type="match status" value="1"/>
</dbReference>
<dbReference type="FunFam" id="2.40.50.140:FF:000099">
    <property type="entry name" value="Ribosomal protein S12, mitochondrial"/>
    <property type="match status" value="1"/>
</dbReference>
<dbReference type="Gene3D" id="2.40.50.140">
    <property type="entry name" value="Nucleic acid-binding proteins"/>
    <property type="match status" value="1"/>
</dbReference>
<dbReference type="HAMAP" id="MF_00403_B">
    <property type="entry name" value="Ribosomal_uS12_B"/>
    <property type="match status" value="1"/>
</dbReference>
<dbReference type="InterPro" id="IPR012340">
    <property type="entry name" value="NA-bd_OB-fold"/>
</dbReference>
<dbReference type="InterPro" id="IPR006032">
    <property type="entry name" value="Ribosomal_uS12"/>
</dbReference>
<dbReference type="InterPro" id="IPR005679">
    <property type="entry name" value="Ribosomal_uS12_bac"/>
</dbReference>
<dbReference type="NCBIfam" id="TIGR00981">
    <property type="entry name" value="rpsL_bact"/>
    <property type="match status" value="1"/>
</dbReference>
<dbReference type="PANTHER" id="PTHR11652">
    <property type="entry name" value="30S RIBOSOMAL PROTEIN S12 FAMILY MEMBER"/>
    <property type="match status" value="1"/>
</dbReference>
<dbReference type="Pfam" id="PF00164">
    <property type="entry name" value="Ribosom_S12_S23"/>
    <property type="match status" value="1"/>
</dbReference>
<dbReference type="PIRSF" id="PIRSF002133">
    <property type="entry name" value="Ribosomal_S12/S23"/>
    <property type="match status" value="1"/>
</dbReference>
<dbReference type="PRINTS" id="PR01034">
    <property type="entry name" value="RIBOSOMALS12"/>
</dbReference>
<dbReference type="SUPFAM" id="SSF50249">
    <property type="entry name" value="Nucleic acid-binding proteins"/>
    <property type="match status" value="1"/>
</dbReference>
<dbReference type="PROSITE" id="PS00055">
    <property type="entry name" value="RIBOSOMAL_S12"/>
    <property type="match status" value="1"/>
</dbReference>
<reference key="1">
    <citation type="journal article" date="1988" name="Mol. Gen. Genet.">
        <title>The genes coding for subunit 3 of NADH dehydrogenase and for ribosomal protein S12 are present in the wheat and maize mitochondrial genomes and are co-transcribed.</title>
        <authorList>
            <person name="Gualberto J.M."/>
            <person name="Wintz H."/>
            <person name="Weil J.-H."/>
            <person name="Grienenberger J.-M."/>
        </authorList>
    </citation>
    <scope>NUCLEOTIDE SEQUENCE [GENOMIC DNA]</scope>
    <source>
        <tissue>Hypocotyl</tissue>
    </source>
</reference>
<reference key="2">
    <citation type="journal article" date="1991" name="Plant Cell">
        <title>Expression of the wheat mitochondrial nad3-rps12 transcription unit: correlation between editing and mRNA maturation.</title>
        <authorList>
            <person name="Gualberto J.M."/>
            <person name="Bonnard G."/>
            <person name="Lamattina L."/>
            <person name="Grienenberger J.-M."/>
        </authorList>
    </citation>
    <scope>NUCLEOTIDE SEQUENCE [GENOMIC DNA]</scope>
    <scope>RNA EDITING</scope>
    <source>
        <strain>cv. Capitole</strain>
    </source>
</reference>